<protein>
    <recommendedName>
        <fullName>Scavenger receptor class A member 3</fullName>
    </recommendedName>
    <alternativeName>
        <fullName>Cellular stress response gene protein</fullName>
    </alternativeName>
</protein>
<accession>Q6AZY7</accession>
<accession>Q9UM15</accession>
<accession>Q9UM16</accession>
<dbReference type="EMBL" id="AB007829">
    <property type="protein sequence ID" value="BAA86201.1"/>
    <property type="molecule type" value="mRNA"/>
</dbReference>
<dbReference type="EMBL" id="AB007830">
    <property type="protein sequence ID" value="BAA86202.1"/>
    <property type="molecule type" value="mRNA"/>
</dbReference>
<dbReference type="EMBL" id="DQ205185">
    <property type="protein sequence ID" value="ABA27098.1"/>
    <property type="molecule type" value="Genomic_DNA"/>
</dbReference>
<dbReference type="EMBL" id="BC060811">
    <property type="protein sequence ID" value="AAH60811.1"/>
    <property type="molecule type" value="mRNA"/>
</dbReference>
<dbReference type="EMBL" id="BC075067">
    <property type="protein sequence ID" value="AAH75067.1"/>
    <property type="molecule type" value="mRNA"/>
</dbReference>
<dbReference type="EMBL" id="BC075068">
    <property type="protein sequence ID" value="AAH75068.1"/>
    <property type="molecule type" value="mRNA"/>
</dbReference>
<dbReference type="CCDS" id="CCDS34870.1">
    <molecule id="Q6AZY7-2"/>
</dbReference>
<dbReference type="CCDS" id="CCDS34871.1">
    <molecule id="Q6AZY7-1"/>
</dbReference>
<dbReference type="RefSeq" id="NP_057324.2">
    <molecule id="Q6AZY7-1"/>
    <property type="nucleotide sequence ID" value="NM_016240.2"/>
</dbReference>
<dbReference type="RefSeq" id="NP_878185.1">
    <molecule id="Q6AZY7-2"/>
    <property type="nucleotide sequence ID" value="NM_182826.2"/>
</dbReference>
<dbReference type="RefSeq" id="XP_016869024.1">
    <molecule id="Q6AZY7-1"/>
    <property type="nucleotide sequence ID" value="XM_017013535.2"/>
</dbReference>
<dbReference type="RefSeq" id="XP_047277806.1">
    <molecule id="Q6AZY7-1"/>
    <property type="nucleotide sequence ID" value="XM_047421850.1"/>
</dbReference>
<dbReference type="RefSeq" id="XP_054216604.1">
    <molecule id="Q6AZY7-1"/>
    <property type="nucleotide sequence ID" value="XM_054360629.1"/>
</dbReference>
<dbReference type="RefSeq" id="XP_054216605.1">
    <molecule id="Q6AZY7-1"/>
    <property type="nucleotide sequence ID" value="XM_054360630.1"/>
</dbReference>
<dbReference type="SMR" id="Q6AZY7"/>
<dbReference type="BioGRID" id="119539">
    <property type="interactions" value="120"/>
</dbReference>
<dbReference type="FunCoup" id="Q6AZY7">
    <property type="interactions" value="361"/>
</dbReference>
<dbReference type="IntAct" id="Q6AZY7">
    <property type="interactions" value="66"/>
</dbReference>
<dbReference type="MINT" id="Q6AZY7"/>
<dbReference type="STRING" id="9606.ENSP00000301904"/>
<dbReference type="GlyCosmos" id="Q6AZY7">
    <property type="glycosylation" value="10 sites, No reported glycans"/>
</dbReference>
<dbReference type="GlyGen" id="Q6AZY7">
    <property type="glycosylation" value="13 sites, 10 N-linked glycans (8 sites), 1 O-linked glycan (3 sites)"/>
</dbReference>
<dbReference type="iPTMnet" id="Q6AZY7"/>
<dbReference type="PhosphoSitePlus" id="Q6AZY7"/>
<dbReference type="BioMuta" id="SCARA3"/>
<dbReference type="DMDM" id="74736352"/>
<dbReference type="jPOST" id="Q6AZY7"/>
<dbReference type="MassIVE" id="Q6AZY7"/>
<dbReference type="PaxDb" id="9606-ENSP00000301904"/>
<dbReference type="PeptideAtlas" id="Q6AZY7"/>
<dbReference type="ProteomicsDB" id="66202">
    <molecule id="Q6AZY7-1"/>
</dbReference>
<dbReference type="ProteomicsDB" id="66203">
    <molecule id="Q6AZY7-2"/>
</dbReference>
<dbReference type="Pumba" id="Q6AZY7"/>
<dbReference type="Antibodypedia" id="23041">
    <property type="antibodies" value="109 antibodies from 27 providers"/>
</dbReference>
<dbReference type="DNASU" id="51435"/>
<dbReference type="Ensembl" id="ENST00000301904.4">
    <molecule id="Q6AZY7-1"/>
    <property type="protein sequence ID" value="ENSP00000301904.3"/>
    <property type="gene ID" value="ENSG00000168077.14"/>
</dbReference>
<dbReference type="Ensembl" id="ENST00000337221.8">
    <molecule id="Q6AZY7-2"/>
    <property type="protein sequence ID" value="ENSP00000337985.3"/>
    <property type="gene ID" value="ENSG00000168077.14"/>
</dbReference>
<dbReference type="GeneID" id="51435"/>
<dbReference type="KEGG" id="hsa:51435"/>
<dbReference type="MANE-Select" id="ENST00000301904.4">
    <property type="protein sequence ID" value="ENSP00000301904.3"/>
    <property type="RefSeq nucleotide sequence ID" value="NM_016240.3"/>
    <property type="RefSeq protein sequence ID" value="NP_057324.2"/>
</dbReference>
<dbReference type="UCSC" id="uc003xga.2">
    <molecule id="Q6AZY7-1"/>
    <property type="organism name" value="human"/>
</dbReference>
<dbReference type="AGR" id="HGNC:19000"/>
<dbReference type="CTD" id="51435"/>
<dbReference type="DisGeNET" id="51435"/>
<dbReference type="GeneCards" id="SCARA3"/>
<dbReference type="HGNC" id="HGNC:19000">
    <property type="gene designation" value="SCARA3"/>
</dbReference>
<dbReference type="HPA" id="ENSG00000168077">
    <property type="expression patterns" value="Low tissue specificity"/>
</dbReference>
<dbReference type="MIM" id="602728">
    <property type="type" value="gene"/>
</dbReference>
<dbReference type="neXtProt" id="NX_Q6AZY7"/>
<dbReference type="OpenTargets" id="ENSG00000168077"/>
<dbReference type="PharmGKB" id="PA38775"/>
<dbReference type="VEuPathDB" id="HostDB:ENSG00000168077"/>
<dbReference type="eggNOG" id="ENOG502QV37">
    <property type="taxonomic scope" value="Eukaryota"/>
</dbReference>
<dbReference type="GeneTree" id="ENSGT00940000158238"/>
<dbReference type="HOGENOM" id="CLU_027961_0_0_1"/>
<dbReference type="InParanoid" id="Q6AZY7"/>
<dbReference type="OMA" id="DLAQECY"/>
<dbReference type="OrthoDB" id="5835334at2759"/>
<dbReference type="PAN-GO" id="Q6AZY7">
    <property type="GO annotations" value="2 GO annotations based on evolutionary models"/>
</dbReference>
<dbReference type="PhylomeDB" id="Q6AZY7"/>
<dbReference type="TreeFam" id="TF332426"/>
<dbReference type="PathwayCommons" id="Q6AZY7"/>
<dbReference type="SignaLink" id="Q6AZY7"/>
<dbReference type="BioGRID-ORCS" id="51435">
    <property type="hits" value="8 hits in 1152 CRISPR screens"/>
</dbReference>
<dbReference type="ChiTaRS" id="SCARA3">
    <property type="organism name" value="human"/>
</dbReference>
<dbReference type="GenomeRNAi" id="51435"/>
<dbReference type="Pharos" id="Q6AZY7">
    <property type="development level" value="Tbio"/>
</dbReference>
<dbReference type="PRO" id="PR:Q6AZY7"/>
<dbReference type="Proteomes" id="UP000005640">
    <property type="component" value="Chromosome 8"/>
</dbReference>
<dbReference type="RNAct" id="Q6AZY7">
    <property type="molecule type" value="protein"/>
</dbReference>
<dbReference type="Bgee" id="ENSG00000168077">
    <property type="expression patterns" value="Expressed in calcaneal tendon and 163 other cell types or tissues"/>
</dbReference>
<dbReference type="GO" id="GO:0005581">
    <property type="term" value="C:collagen trimer"/>
    <property type="evidence" value="ECO:0007669"/>
    <property type="project" value="UniProtKB-KW"/>
</dbReference>
<dbReference type="GO" id="GO:0005783">
    <property type="term" value="C:endoplasmic reticulum"/>
    <property type="evidence" value="ECO:0000314"/>
    <property type="project" value="HPA"/>
</dbReference>
<dbReference type="GO" id="GO:0005789">
    <property type="term" value="C:endoplasmic reticulum membrane"/>
    <property type="evidence" value="ECO:0007669"/>
    <property type="project" value="UniProtKB-SubCell"/>
</dbReference>
<dbReference type="GO" id="GO:0000139">
    <property type="term" value="C:Golgi membrane"/>
    <property type="evidence" value="ECO:0007669"/>
    <property type="project" value="UniProtKB-SubCell"/>
</dbReference>
<dbReference type="GO" id="GO:0005044">
    <property type="term" value="F:scavenger receptor activity"/>
    <property type="evidence" value="ECO:0000304"/>
    <property type="project" value="ProtInc"/>
</dbReference>
<dbReference type="GO" id="GO:0006979">
    <property type="term" value="P:response to oxidative stress"/>
    <property type="evidence" value="ECO:0000304"/>
    <property type="project" value="ProtInc"/>
</dbReference>
<dbReference type="GO" id="GO:0009650">
    <property type="term" value="P:UV protection"/>
    <property type="evidence" value="ECO:0000304"/>
    <property type="project" value="ProtInc"/>
</dbReference>
<dbReference type="InterPro" id="IPR008160">
    <property type="entry name" value="Collagen"/>
</dbReference>
<dbReference type="InterPro" id="IPR052376">
    <property type="entry name" value="Oxidative_Scav/Glycosyltrans"/>
</dbReference>
<dbReference type="PANTHER" id="PTHR39082">
    <property type="entry name" value="PHOSPHOLIPASE C-BETA-2-RELATED"/>
    <property type="match status" value="1"/>
</dbReference>
<dbReference type="PANTHER" id="PTHR39082:SF1">
    <property type="entry name" value="SCAVENGER RECEPTOR CLASS A MEMBER 3"/>
    <property type="match status" value="1"/>
</dbReference>
<dbReference type="Pfam" id="PF01391">
    <property type="entry name" value="Collagen"/>
    <property type="match status" value="2"/>
</dbReference>
<comment type="function">
    <text evidence="3">Seems to protect cells by scavenging oxidative molecules or harmful products of oxidation.</text>
</comment>
<comment type="interaction">
    <interactant intactId="EBI-8657660">
        <id>Q6AZY7</id>
    </interactant>
    <interactant intactId="EBI-1104680">
        <id>Q5KU26</id>
        <label>COLEC12</label>
    </interactant>
    <organismsDiffer>false</organismsDiffer>
    <experiments>2</experiments>
</comment>
<comment type="interaction">
    <interactant intactId="EBI-8657660">
        <id>Q6AZY7</id>
    </interactant>
    <interactant intactId="EBI-2826419">
        <id>O43760</id>
        <label>SYNGR2</label>
    </interactant>
    <organismsDiffer>false</organismsDiffer>
    <experiments>3</experiments>
</comment>
<comment type="interaction">
    <interactant intactId="EBI-21598366">
        <id>Q6AZY7-2</id>
    </interactant>
    <interactant intactId="EBI-77613">
        <id>P05067</id>
        <label>APP</label>
    </interactant>
    <organismsDiffer>false</organismsDiffer>
    <experiments>3</experiments>
</comment>
<comment type="interaction">
    <interactant intactId="EBI-21598366">
        <id>Q6AZY7-2</id>
    </interactant>
    <interactant intactId="EBI-713665">
        <id>P19404</id>
        <label>NDUFV2</label>
    </interactant>
    <organismsDiffer>false</organismsDiffer>
    <experiments>3</experiments>
</comment>
<comment type="subcellular location">
    <subcellularLocation>
        <location evidence="3">Endoplasmic reticulum membrane</location>
        <topology evidence="3">Single-pass type II membrane protein</topology>
    </subcellularLocation>
    <subcellularLocation>
        <location evidence="3">Golgi apparatus membrane</location>
        <topology evidence="3">Single-pass type II membrane protein</topology>
    </subcellularLocation>
    <text>Endoplasmic reticulum and/or Golgi.</text>
</comment>
<comment type="alternative products">
    <event type="alternative splicing"/>
    <isoform>
        <id>Q6AZY7-1</id>
        <name>1</name>
        <name>CSR1</name>
        <sequence type="displayed"/>
    </isoform>
    <isoform>
        <id>Q6AZY7-2</id>
        <name>2</name>
        <name>CSR2</name>
        <sequence type="described" ref="VSP_017135 VSP_017136"/>
    </isoform>
</comment>
<comment type="tissue specificity">
    <text evidence="3">Expressed ubiquitously.</text>
</comment>
<proteinExistence type="evidence at protein level"/>
<evidence type="ECO:0000255" key="1"/>
<evidence type="ECO:0000256" key="2">
    <source>
        <dbReference type="SAM" id="MobiDB-lite"/>
    </source>
</evidence>
<evidence type="ECO:0000269" key="3">
    <source>
    </source>
</evidence>
<evidence type="ECO:0000269" key="4">
    <source ref="2"/>
</evidence>
<evidence type="ECO:0000303" key="5">
    <source>
    </source>
</evidence>
<evidence type="ECO:0000303" key="6">
    <source>
    </source>
</evidence>
<evidence type="ECO:0000305" key="7"/>
<sequence>MKVRSAGGDGDALCVTEEDLAGDDEDMPTFPCTQKGRPGPRCSRCQKNLSLHTSVRILYLFLALLLVAVAVLASLVFRKVDSLSEDISLTQSIYDKKLVLMQKNLQGLDPKALNNCSFCHEAGQLGPEIRKLQEELEGIQKLLLAQEVQLDQTLQAQEVLSTTSRQISQEMGSCSFSIHQVNQSLGLFLAQVRGWQATTAGLDLSLKDLTQECYDVKAAVHQINFTVGQTSEWIHGIQRKTDEETLTLQKIVTDWQNYTRLFSGLRTTSTKTGEAVKNIQATLGASSQRISQNSESMHDLVLQVMGLQLQLDNISSFLDDHEENMHDLQYHTHYAQNRTVERFESLEGRMASHEIEIGTIFTNINATDNHVHSMLKYLDDVRLSCTLGFHTHAEELYYLNKSVSIMLGTTDLLRERFSLLSARLDLNVRNLSMIVEEMKAVDTQHGEILRNVTILRGAPGPPGPRGFKGDMGVKGPVGGRGPKGDPGSLGPLGPQGPQGQPGEAGPVGERGPVGPRGFPGLKGSKGSFGTGGPRGQPGPKGDIGPPGPEGPPGSPGPSGPQGKPGIAGKTGSPGQRGAMGPKGEPGIQGPPGLPGPPGPPGSQSFY</sequence>
<keyword id="KW-0025">Alternative splicing</keyword>
<keyword id="KW-0176">Collagen</keyword>
<keyword id="KW-0256">Endoplasmic reticulum</keyword>
<keyword id="KW-0325">Glycoprotein</keyword>
<keyword id="KW-0333">Golgi apparatus</keyword>
<keyword id="KW-0472">Membrane</keyword>
<keyword id="KW-1267">Proteomics identification</keyword>
<keyword id="KW-1185">Reference proteome</keyword>
<keyword id="KW-0677">Repeat</keyword>
<keyword id="KW-0735">Signal-anchor</keyword>
<keyword id="KW-0812">Transmembrane</keyword>
<keyword id="KW-1133">Transmembrane helix</keyword>
<name>SCAR3_HUMAN</name>
<gene>
    <name type="primary">SCARA3</name>
    <name type="synonym">CSR</name>
</gene>
<reference key="1">
    <citation type="journal article" date="1998" name="Hum. Mol. Genet.">
        <title>CSR, a scavenger receptor-like protein with a protective role against cellular damage caused by UV irradiation and oxidative stress.</title>
        <authorList>
            <person name="Han H.-J."/>
            <person name="Tokino T."/>
            <person name="Nakamura Y."/>
        </authorList>
    </citation>
    <scope>NUCLEOTIDE SEQUENCE [MRNA] (ISOFORMS 1 AND 2)</scope>
    <scope>FUNCTION</scope>
    <scope>SUBCELLULAR LOCATION</scope>
    <scope>TISSUE SPECIFICITY</scope>
    <source>
        <tissue>Fetal brain</tissue>
    </source>
</reference>
<reference key="2">
    <citation type="submission" date="2005-09" db="EMBL/GenBank/DDBJ databases">
        <authorList>
            <consortium name="NIEHS SNPs program"/>
        </authorList>
    </citation>
    <scope>NUCLEOTIDE SEQUENCE [GENOMIC DNA]</scope>
    <scope>VARIANTS GLN-130; THR-325; GLN-423; ILE-428; LEU-467 AND SER-551</scope>
</reference>
<reference key="3">
    <citation type="journal article" date="2004" name="Genome Res.">
        <title>The status, quality, and expansion of the NIH full-length cDNA project: the Mammalian Gene Collection (MGC).</title>
        <authorList>
            <consortium name="The MGC Project Team"/>
        </authorList>
    </citation>
    <scope>NUCLEOTIDE SEQUENCE [LARGE SCALE MRNA] (ISOFORMS 1 AND 2)</scope>
    <source>
        <tissue>Brain</tissue>
        <tissue>Placenta</tissue>
    </source>
</reference>
<organism>
    <name type="scientific">Homo sapiens</name>
    <name type="common">Human</name>
    <dbReference type="NCBI Taxonomy" id="9606"/>
    <lineage>
        <taxon>Eukaryota</taxon>
        <taxon>Metazoa</taxon>
        <taxon>Chordata</taxon>
        <taxon>Craniata</taxon>
        <taxon>Vertebrata</taxon>
        <taxon>Euteleostomi</taxon>
        <taxon>Mammalia</taxon>
        <taxon>Eutheria</taxon>
        <taxon>Euarchontoglires</taxon>
        <taxon>Primates</taxon>
        <taxon>Haplorrhini</taxon>
        <taxon>Catarrhini</taxon>
        <taxon>Hominidae</taxon>
        <taxon>Homo</taxon>
    </lineage>
</organism>
<feature type="chain" id="PRO_0000181633" description="Scavenger receptor class A member 3">
    <location>
        <begin position="1"/>
        <end position="606"/>
    </location>
</feature>
<feature type="topological domain" description="Cytoplasmic" evidence="1">
    <location>
        <begin position="1"/>
        <end position="56"/>
    </location>
</feature>
<feature type="transmembrane region" description="Helical; Signal-anchor for type II membrane protein" evidence="1">
    <location>
        <begin position="57"/>
        <end position="77"/>
    </location>
</feature>
<feature type="topological domain" description="Extracellular" evidence="1">
    <location>
        <begin position="78"/>
        <end position="606"/>
    </location>
</feature>
<feature type="domain" description="Collagen-like 1">
    <location>
        <begin position="455"/>
        <end position="513"/>
    </location>
</feature>
<feature type="domain" description="Collagen-like 2">
    <location>
        <begin position="544"/>
        <end position="603"/>
    </location>
</feature>
<feature type="region of interest" description="Disordered" evidence="2">
    <location>
        <begin position="454"/>
        <end position="606"/>
    </location>
</feature>
<feature type="compositionally biased region" description="Low complexity" evidence="2">
    <location>
        <begin position="485"/>
        <end position="519"/>
    </location>
</feature>
<feature type="compositionally biased region" description="Gly residues" evidence="2">
    <location>
        <begin position="526"/>
        <end position="535"/>
    </location>
</feature>
<feature type="compositionally biased region" description="Pro residues" evidence="2">
    <location>
        <begin position="545"/>
        <end position="558"/>
    </location>
</feature>
<feature type="compositionally biased region" description="Pro residues" evidence="2">
    <location>
        <begin position="591"/>
        <end position="600"/>
    </location>
</feature>
<feature type="glycosylation site" description="N-linked (GlcNAc...) asparagine" evidence="1">
    <location>
        <position position="115"/>
    </location>
</feature>
<feature type="glycosylation site" description="N-linked (GlcNAc...) asparagine" evidence="1">
    <location>
        <position position="182"/>
    </location>
</feature>
<feature type="glycosylation site" description="N-linked (GlcNAc...) asparagine" evidence="1">
    <location>
        <position position="224"/>
    </location>
</feature>
<feature type="glycosylation site" description="N-linked (GlcNAc...) asparagine" evidence="1">
    <location>
        <position position="257"/>
    </location>
</feature>
<feature type="glycosylation site" description="N-linked (GlcNAc...) asparagine" evidence="1">
    <location>
        <position position="313"/>
    </location>
</feature>
<feature type="glycosylation site" description="N-linked (GlcNAc...) asparagine" evidence="1">
    <location>
        <position position="337"/>
    </location>
</feature>
<feature type="glycosylation site" description="N-linked (GlcNAc...) asparagine" evidence="1">
    <location>
        <position position="365"/>
    </location>
</feature>
<feature type="glycosylation site" description="N-linked (GlcNAc...) asparagine" evidence="1">
    <location>
        <position position="400"/>
    </location>
</feature>
<feature type="glycosylation site" description="N-linked (GlcNAc...) asparagine" evidence="1">
    <location>
        <position position="430"/>
    </location>
</feature>
<feature type="glycosylation site" description="N-linked (GlcNAc...) asparagine" evidence="1">
    <location>
        <position position="451"/>
    </location>
</feature>
<feature type="splice variant" id="VSP_017135" description="In isoform 2." evidence="5 6">
    <original>APGPPGPRG</original>
    <variation>HTLFSHNRI</variation>
    <location>
        <begin position="458"/>
        <end position="466"/>
    </location>
</feature>
<feature type="splice variant" id="VSP_017136" description="In isoform 2." evidence="5 6">
    <location>
        <begin position="467"/>
        <end position="606"/>
    </location>
</feature>
<feature type="sequence variant" id="VAR_025228" description="In dbSNP:rs34791518." evidence="4">
    <original>R</original>
    <variation>Q</variation>
    <location>
        <position position="130"/>
    </location>
</feature>
<feature type="sequence variant" id="VAR_025229" description="In dbSNP:rs33930667." evidence="4">
    <original>M</original>
    <variation>T</variation>
    <location>
        <position position="325"/>
    </location>
</feature>
<feature type="sequence variant" id="VAR_025230" description="In dbSNP:rs3735754." evidence="4">
    <original>R</original>
    <variation>Q</variation>
    <location>
        <position position="423"/>
    </location>
</feature>
<feature type="sequence variant" id="VAR_025231" description="In dbSNP:rs34086286." evidence="4">
    <original>V</original>
    <variation>I</variation>
    <location>
        <position position="428"/>
    </location>
</feature>
<feature type="sequence variant" id="VAR_025232" description="In dbSNP:rs17057523." evidence="4">
    <original>F</original>
    <variation>L</variation>
    <location>
        <position position="467"/>
    </location>
</feature>
<feature type="sequence variant" id="VAR_025233" description="In dbSNP:rs35928641." evidence="4">
    <original>P</original>
    <variation>S</variation>
    <location>
        <position position="551"/>
    </location>
</feature>
<feature type="sequence conflict" description="In Ref. 1; BAA86201." evidence="7" ref="1">
    <original>S</original>
    <variation>I</variation>
    <location>
        <position position="488"/>
    </location>
</feature>